<proteinExistence type="inferred from homology"/>
<sequence>MLTLKIAVYIVVAFFVAIFVFGFLSNDPARNPGRRDLE</sequence>
<evidence type="ECO:0000255" key="1">
    <source>
        <dbReference type="HAMAP-Rule" id="MF_01316"/>
    </source>
</evidence>
<evidence type="ECO:0000305" key="2"/>
<organism>
    <name type="scientific">Trichormus variabilis (strain ATCC 29413 / PCC 7937)</name>
    <name type="common">Anabaena variabilis</name>
    <dbReference type="NCBI Taxonomy" id="240292"/>
    <lineage>
        <taxon>Bacteria</taxon>
        <taxon>Bacillati</taxon>
        <taxon>Cyanobacteriota</taxon>
        <taxon>Cyanophyceae</taxon>
        <taxon>Nostocales</taxon>
        <taxon>Nostocaceae</taxon>
        <taxon>Trichormus</taxon>
    </lineage>
</organism>
<accession>Q3M8S5</accession>
<keyword id="KW-0472">Membrane</keyword>
<keyword id="KW-0602">Photosynthesis</keyword>
<keyword id="KW-0604">Photosystem II</keyword>
<keyword id="KW-0674">Reaction center</keyword>
<keyword id="KW-0793">Thylakoid</keyword>
<keyword id="KW-0812">Transmembrane</keyword>
<keyword id="KW-1133">Transmembrane helix</keyword>
<protein>
    <recommendedName>
        <fullName evidence="1">Photosystem II reaction center protein I</fullName>
        <shortName evidence="1">PSII-I</shortName>
    </recommendedName>
    <alternativeName>
        <fullName evidence="1">PSII 4.4 kDa protein</fullName>
    </alternativeName>
</protein>
<name>PSBI_TRIV2</name>
<comment type="function">
    <text evidence="1">One of the components of the core complex of photosystem II (PSII), required for its stability and/or assembly. PSII is a light-driven water:plastoquinone oxidoreductase that uses light energy to abstract electrons from H(2)O, generating O(2) and a proton gradient subsequently used for ATP formation. It consists of a core antenna complex that captures photons, and an electron transfer chain that converts photonic excitation into a charge separation.</text>
</comment>
<comment type="subunit">
    <text evidence="1">PSII is composed of 1 copy each of membrane proteins PsbA, PsbB, PsbC, PsbD, PsbE, PsbF, PsbH, PsbI, PsbJ, PsbK, PsbL, PsbM, PsbT, PsbX, PsbY, PsbZ, Psb30/Ycf12, peripheral proteins PsbO, CyanoQ (PsbQ), PsbU, PsbV and a large number of cofactors. It forms dimeric complexes.</text>
</comment>
<comment type="subcellular location">
    <subcellularLocation>
        <location evidence="1">Cellular thylakoid membrane</location>
        <topology evidence="1">Single-pass membrane protein</topology>
    </subcellularLocation>
</comment>
<comment type="similarity">
    <text evidence="1">Belongs to the PsbI family.</text>
</comment>
<comment type="sequence caution" evidence="2">
    <conflict type="erroneous initiation">
        <sequence resource="EMBL-CDS" id="ABA22611"/>
    </conflict>
    <text>Extended N-terminus.</text>
</comment>
<feature type="chain" id="PRO_0000298291" description="Photosystem II reaction center protein I">
    <location>
        <begin position="1"/>
        <end position="38"/>
    </location>
</feature>
<feature type="transmembrane region" description="Helical" evidence="1">
    <location>
        <begin position="4"/>
        <end position="24"/>
    </location>
</feature>
<gene>
    <name evidence="1" type="primary">psbI</name>
    <name type="ordered locus">Ava_3001</name>
</gene>
<dbReference type="EMBL" id="CP000117">
    <property type="protein sequence ID" value="ABA22611.1"/>
    <property type="status" value="ALT_INIT"/>
    <property type="molecule type" value="Genomic_DNA"/>
</dbReference>
<dbReference type="RefSeq" id="WP_010995449.1">
    <property type="nucleotide sequence ID" value="NC_007413.1"/>
</dbReference>
<dbReference type="SMR" id="Q3M8S5"/>
<dbReference type="STRING" id="240292.Ava_3001"/>
<dbReference type="KEGG" id="ava:Ava_3001"/>
<dbReference type="eggNOG" id="ENOG5033CII">
    <property type="taxonomic scope" value="Bacteria"/>
</dbReference>
<dbReference type="HOGENOM" id="CLU_212150_0_0_3"/>
<dbReference type="Proteomes" id="UP000002533">
    <property type="component" value="Chromosome"/>
</dbReference>
<dbReference type="GO" id="GO:0009539">
    <property type="term" value="C:photosystem II reaction center"/>
    <property type="evidence" value="ECO:0007669"/>
    <property type="project" value="InterPro"/>
</dbReference>
<dbReference type="GO" id="GO:0031676">
    <property type="term" value="C:plasma membrane-derived thylakoid membrane"/>
    <property type="evidence" value="ECO:0007669"/>
    <property type="project" value="UniProtKB-SubCell"/>
</dbReference>
<dbReference type="GO" id="GO:0015979">
    <property type="term" value="P:photosynthesis"/>
    <property type="evidence" value="ECO:0007669"/>
    <property type="project" value="UniProtKB-UniRule"/>
</dbReference>
<dbReference type="HAMAP" id="MF_01316">
    <property type="entry name" value="PSII_PsbI"/>
    <property type="match status" value="1"/>
</dbReference>
<dbReference type="InterPro" id="IPR003686">
    <property type="entry name" value="PSII_PsbI"/>
</dbReference>
<dbReference type="InterPro" id="IPR037271">
    <property type="entry name" value="PSII_PsbI_sf"/>
</dbReference>
<dbReference type="NCBIfam" id="NF002735">
    <property type="entry name" value="PRK02655.1"/>
    <property type="match status" value="1"/>
</dbReference>
<dbReference type="PANTHER" id="PTHR35772">
    <property type="entry name" value="PHOTOSYSTEM II REACTION CENTER PROTEIN I"/>
    <property type="match status" value="1"/>
</dbReference>
<dbReference type="PANTHER" id="PTHR35772:SF1">
    <property type="entry name" value="PHOTOSYSTEM II REACTION CENTER PROTEIN I"/>
    <property type="match status" value="1"/>
</dbReference>
<dbReference type="Pfam" id="PF02532">
    <property type="entry name" value="PsbI"/>
    <property type="match status" value="1"/>
</dbReference>
<dbReference type="SUPFAM" id="SSF161041">
    <property type="entry name" value="Photosystem II reaction center protein I, PsbI"/>
    <property type="match status" value="1"/>
</dbReference>
<reference key="1">
    <citation type="journal article" date="2014" name="Stand. Genomic Sci.">
        <title>Complete genome sequence of Anabaena variabilis ATCC 29413.</title>
        <authorList>
            <person name="Thiel T."/>
            <person name="Pratte B.S."/>
            <person name="Zhong J."/>
            <person name="Goodwin L."/>
            <person name="Copeland A."/>
            <person name="Lucas S."/>
            <person name="Han C."/>
            <person name="Pitluck S."/>
            <person name="Land M.L."/>
            <person name="Kyrpides N.C."/>
            <person name="Woyke T."/>
        </authorList>
    </citation>
    <scope>NUCLEOTIDE SEQUENCE [LARGE SCALE GENOMIC DNA]</scope>
    <source>
        <strain>ATCC 29413 / PCC 7937</strain>
    </source>
</reference>